<protein>
    <recommendedName>
        <fullName evidence="1">Phosphoribosylformylglycinamidine synthase subunit PurL</fullName>
        <shortName evidence="1">FGAM synthase</shortName>
        <ecNumber evidence="1">6.3.5.3</ecNumber>
    </recommendedName>
    <alternativeName>
        <fullName evidence="1">Formylglycinamide ribonucleotide amidotransferase subunit II</fullName>
        <shortName evidence="1">FGAR amidotransferase II</shortName>
        <shortName evidence="1">FGAR-AT II</shortName>
    </alternativeName>
    <alternativeName>
        <fullName evidence="1">Glutamine amidotransferase PurL</fullName>
    </alternativeName>
    <alternativeName>
        <fullName evidence="1">Phosphoribosylformylglycinamidine synthase subunit II</fullName>
    </alternativeName>
</protein>
<accession>B7H4T6</accession>
<feature type="chain" id="PRO_1000194820" description="Phosphoribosylformylglycinamidine synthase subunit PurL">
    <location>
        <begin position="1"/>
        <end position="739"/>
    </location>
</feature>
<feature type="active site" evidence="1">
    <location>
        <position position="54"/>
    </location>
</feature>
<feature type="active site" description="Proton acceptor" evidence="1">
    <location>
        <position position="100"/>
    </location>
</feature>
<feature type="binding site" evidence="1">
    <location>
        <position position="57"/>
    </location>
    <ligand>
        <name>ATP</name>
        <dbReference type="ChEBI" id="CHEBI:30616"/>
    </ligand>
</feature>
<feature type="binding site" evidence="1">
    <location>
        <position position="96"/>
    </location>
    <ligand>
        <name>ATP</name>
        <dbReference type="ChEBI" id="CHEBI:30616"/>
    </ligand>
</feature>
<feature type="binding site" evidence="1">
    <location>
        <position position="98"/>
    </location>
    <ligand>
        <name>Mg(2+)</name>
        <dbReference type="ChEBI" id="CHEBI:18420"/>
        <label>1</label>
    </ligand>
</feature>
<feature type="binding site" evidence="1">
    <location>
        <begin position="99"/>
        <end position="102"/>
    </location>
    <ligand>
        <name>substrate</name>
    </ligand>
</feature>
<feature type="binding site" evidence="1">
    <location>
        <position position="121"/>
    </location>
    <ligand>
        <name>substrate</name>
    </ligand>
</feature>
<feature type="binding site" evidence="1">
    <location>
        <position position="122"/>
    </location>
    <ligand>
        <name>Mg(2+)</name>
        <dbReference type="ChEBI" id="CHEBI:18420"/>
        <label>2</label>
    </ligand>
</feature>
<feature type="binding site" evidence="1">
    <location>
        <position position="245"/>
    </location>
    <ligand>
        <name>substrate</name>
    </ligand>
</feature>
<feature type="binding site" evidence="1">
    <location>
        <position position="273"/>
    </location>
    <ligand>
        <name>Mg(2+)</name>
        <dbReference type="ChEBI" id="CHEBI:18420"/>
        <label>2</label>
    </ligand>
</feature>
<feature type="binding site" evidence="1">
    <location>
        <begin position="317"/>
        <end position="319"/>
    </location>
    <ligand>
        <name>substrate</name>
    </ligand>
</feature>
<feature type="binding site" evidence="1">
    <location>
        <position position="500"/>
    </location>
    <ligand>
        <name>ATP</name>
        <dbReference type="ChEBI" id="CHEBI:30616"/>
    </ligand>
</feature>
<feature type="binding site" evidence="1">
    <location>
        <position position="537"/>
    </location>
    <ligand>
        <name>ATP</name>
        <dbReference type="ChEBI" id="CHEBI:30616"/>
    </ligand>
</feature>
<feature type="binding site" evidence="1">
    <location>
        <position position="538"/>
    </location>
    <ligand>
        <name>Mg(2+)</name>
        <dbReference type="ChEBI" id="CHEBI:18420"/>
        <label>1</label>
    </ligand>
</feature>
<feature type="binding site" evidence="1">
    <location>
        <position position="540"/>
    </location>
    <ligand>
        <name>substrate</name>
    </ligand>
</feature>
<proteinExistence type="inferred from homology"/>
<name>PURL_BACC4</name>
<organism>
    <name type="scientific">Bacillus cereus (strain B4264)</name>
    <dbReference type="NCBI Taxonomy" id="405532"/>
    <lineage>
        <taxon>Bacteria</taxon>
        <taxon>Bacillati</taxon>
        <taxon>Bacillota</taxon>
        <taxon>Bacilli</taxon>
        <taxon>Bacillales</taxon>
        <taxon>Bacillaceae</taxon>
        <taxon>Bacillus</taxon>
        <taxon>Bacillus cereus group</taxon>
    </lineage>
</organism>
<dbReference type="EC" id="6.3.5.3" evidence="1"/>
<dbReference type="EMBL" id="CP001176">
    <property type="protein sequence ID" value="ACK62664.1"/>
    <property type="molecule type" value="Genomic_DNA"/>
</dbReference>
<dbReference type="RefSeq" id="WP_000055562.1">
    <property type="nucleotide sequence ID" value="NC_011725.1"/>
</dbReference>
<dbReference type="SMR" id="B7H4T6"/>
<dbReference type="KEGG" id="bcb:BCB4264_A0340"/>
<dbReference type="HOGENOM" id="CLU_003100_0_1_9"/>
<dbReference type="UniPathway" id="UPA00074">
    <property type="reaction ID" value="UER00128"/>
</dbReference>
<dbReference type="Proteomes" id="UP000007096">
    <property type="component" value="Chromosome"/>
</dbReference>
<dbReference type="GO" id="GO:0005737">
    <property type="term" value="C:cytoplasm"/>
    <property type="evidence" value="ECO:0007669"/>
    <property type="project" value="UniProtKB-SubCell"/>
</dbReference>
<dbReference type="GO" id="GO:0005524">
    <property type="term" value="F:ATP binding"/>
    <property type="evidence" value="ECO:0007669"/>
    <property type="project" value="UniProtKB-UniRule"/>
</dbReference>
<dbReference type="GO" id="GO:0000287">
    <property type="term" value="F:magnesium ion binding"/>
    <property type="evidence" value="ECO:0007669"/>
    <property type="project" value="UniProtKB-UniRule"/>
</dbReference>
<dbReference type="GO" id="GO:0004642">
    <property type="term" value="F:phosphoribosylformylglycinamidine synthase activity"/>
    <property type="evidence" value="ECO:0007669"/>
    <property type="project" value="UniProtKB-UniRule"/>
</dbReference>
<dbReference type="GO" id="GO:0006189">
    <property type="term" value="P:'de novo' IMP biosynthetic process"/>
    <property type="evidence" value="ECO:0007669"/>
    <property type="project" value="UniProtKB-UniRule"/>
</dbReference>
<dbReference type="CDD" id="cd02203">
    <property type="entry name" value="PurL_repeat1"/>
    <property type="match status" value="1"/>
</dbReference>
<dbReference type="CDD" id="cd02204">
    <property type="entry name" value="PurL_repeat2"/>
    <property type="match status" value="1"/>
</dbReference>
<dbReference type="FunFam" id="3.30.1330.10:FF:000004">
    <property type="entry name" value="Phosphoribosylformylglycinamidine synthase subunit PurL"/>
    <property type="match status" value="1"/>
</dbReference>
<dbReference type="FunFam" id="3.30.1330.10:FF:000011">
    <property type="entry name" value="Phosphoribosylformylglycinamidine synthase subunit PurL"/>
    <property type="match status" value="1"/>
</dbReference>
<dbReference type="FunFam" id="3.90.650.10:FF:000009">
    <property type="entry name" value="Phosphoribosylformylglycinamidine synthase subunit PurL"/>
    <property type="match status" value="1"/>
</dbReference>
<dbReference type="FunFam" id="3.90.650.10:FF:000013">
    <property type="entry name" value="Phosphoribosylformylglycinamidine synthase subunit PurL"/>
    <property type="match status" value="1"/>
</dbReference>
<dbReference type="Gene3D" id="3.90.650.10">
    <property type="entry name" value="PurM-like C-terminal domain"/>
    <property type="match status" value="2"/>
</dbReference>
<dbReference type="Gene3D" id="3.30.1330.10">
    <property type="entry name" value="PurM-like, N-terminal domain"/>
    <property type="match status" value="2"/>
</dbReference>
<dbReference type="HAMAP" id="MF_00420">
    <property type="entry name" value="PurL_2"/>
    <property type="match status" value="1"/>
</dbReference>
<dbReference type="InterPro" id="IPR010074">
    <property type="entry name" value="PRibForGlyAmidine_synth_PurL"/>
</dbReference>
<dbReference type="InterPro" id="IPR041609">
    <property type="entry name" value="PurL_linker"/>
</dbReference>
<dbReference type="InterPro" id="IPR010918">
    <property type="entry name" value="PurM-like_C_dom"/>
</dbReference>
<dbReference type="InterPro" id="IPR036676">
    <property type="entry name" value="PurM-like_C_sf"/>
</dbReference>
<dbReference type="InterPro" id="IPR016188">
    <property type="entry name" value="PurM-like_N"/>
</dbReference>
<dbReference type="InterPro" id="IPR036921">
    <property type="entry name" value="PurM-like_N_sf"/>
</dbReference>
<dbReference type="NCBIfam" id="TIGR01736">
    <property type="entry name" value="FGAM_synth_II"/>
    <property type="match status" value="1"/>
</dbReference>
<dbReference type="NCBIfam" id="NF002290">
    <property type="entry name" value="PRK01213.1"/>
    <property type="match status" value="1"/>
</dbReference>
<dbReference type="PANTHER" id="PTHR43555">
    <property type="entry name" value="PHOSPHORIBOSYLFORMYLGLYCINAMIDINE SYNTHASE SUBUNIT PURL"/>
    <property type="match status" value="1"/>
</dbReference>
<dbReference type="PANTHER" id="PTHR43555:SF1">
    <property type="entry name" value="PHOSPHORIBOSYLFORMYLGLYCINAMIDINE SYNTHASE SUBUNIT PURL"/>
    <property type="match status" value="1"/>
</dbReference>
<dbReference type="Pfam" id="PF00586">
    <property type="entry name" value="AIRS"/>
    <property type="match status" value="2"/>
</dbReference>
<dbReference type="Pfam" id="PF02769">
    <property type="entry name" value="AIRS_C"/>
    <property type="match status" value="2"/>
</dbReference>
<dbReference type="Pfam" id="PF18072">
    <property type="entry name" value="FGAR-AT_linker"/>
    <property type="match status" value="1"/>
</dbReference>
<dbReference type="PIRSF" id="PIRSF001587">
    <property type="entry name" value="FGAM_synthase_II"/>
    <property type="match status" value="1"/>
</dbReference>
<dbReference type="SUPFAM" id="SSF56042">
    <property type="entry name" value="PurM C-terminal domain-like"/>
    <property type="match status" value="2"/>
</dbReference>
<dbReference type="SUPFAM" id="SSF55326">
    <property type="entry name" value="PurM N-terminal domain-like"/>
    <property type="match status" value="2"/>
</dbReference>
<sequence>MSLMLEPNPTQIKEERIYAEMGLTDEEFAMVEKILGRLPNYTETGLFSVMWSEHCSYKNSKPVLRKFPTTGERVLQGPGEGAGIVDIGDNQAVVFKMESHNHPSAIEPYQGAATGVGGIIRDVFSMGARPVALLNSLRFGELQSPRVKYLFEEVVAGIAGYGNCIGIPTVGGEVQFDPCYEGNPLVNAMCVGLINHEDIKKGQAHGAGNTVMYVGASTGRDGIHGATFASEELSESSEAKRPAVQVGDPFMEKLLIEACLELIQSDALVGIQDMGAAGLTSSSAEMASKAGMGIEMYLDDVPQRETGMTPYEMMLSESQERMLIVVKKGREQEIVDLFEKYGLAAVTMGKVTEDKMLRLFHKGEKVAEVPADALAEEAPIYHKPSKEAAYFAEFQAMKMETPKVENYKETLFALLQQPTIASKEWVYDQYDYQVRTSTVVTPGSDAAVVRVRGTEKGLAMTTDCNSRYIYLDPEMGGKIAVAEAARNIVCSGGEPLAITDCLNFGNPEKPEIFWQIEKSVDGMSEACRTLQTPVIGGNVSMYNERSGEAVYPTPTVGMVGLVHDLKHVTTQEFKQAGDLVYVIGETKAEFGGSELQKMIHGKIFGQSPSIDLDVELKRQKQVLEAIQAGLVQSAHDVAEGGLAVAISESAIGAKGLGATVKLDGEATAALFAESQSRFVITVKRENKEAFEKAVEAIQVGEVTSTNEVTIHNEENEVLLTANVDEMRKAWKGAIPCLLK</sequence>
<comment type="function">
    <text evidence="1">Part of the phosphoribosylformylglycinamidine synthase complex involved in the purines biosynthetic pathway. Catalyzes the ATP-dependent conversion of formylglycinamide ribonucleotide (FGAR) and glutamine to yield formylglycinamidine ribonucleotide (FGAM) and glutamate. The FGAM synthase complex is composed of three subunits. PurQ produces an ammonia molecule by converting glutamine to glutamate. PurL transfers the ammonia molecule to FGAR to form FGAM in an ATP-dependent manner. PurS interacts with PurQ and PurL and is thought to assist in the transfer of the ammonia molecule from PurQ to PurL.</text>
</comment>
<comment type="catalytic activity">
    <reaction evidence="1">
        <text>N(2)-formyl-N(1)-(5-phospho-beta-D-ribosyl)glycinamide + L-glutamine + ATP + H2O = 2-formamido-N(1)-(5-O-phospho-beta-D-ribosyl)acetamidine + L-glutamate + ADP + phosphate + H(+)</text>
        <dbReference type="Rhea" id="RHEA:17129"/>
        <dbReference type="ChEBI" id="CHEBI:15377"/>
        <dbReference type="ChEBI" id="CHEBI:15378"/>
        <dbReference type="ChEBI" id="CHEBI:29985"/>
        <dbReference type="ChEBI" id="CHEBI:30616"/>
        <dbReference type="ChEBI" id="CHEBI:43474"/>
        <dbReference type="ChEBI" id="CHEBI:58359"/>
        <dbReference type="ChEBI" id="CHEBI:147286"/>
        <dbReference type="ChEBI" id="CHEBI:147287"/>
        <dbReference type="ChEBI" id="CHEBI:456216"/>
        <dbReference type="EC" id="6.3.5.3"/>
    </reaction>
</comment>
<comment type="pathway">
    <text evidence="1">Purine metabolism; IMP biosynthesis via de novo pathway; 5-amino-1-(5-phospho-D-ribosyl)imidazole from N(2)-formyl-N(1)-(5-phospho-D-ribosyl)glycinamide: step 1/2.</text>
</comment>
<comment type="subunit">
    <text evidence="1">Monomer. Part of the FGAM synthase complex composed of 1 PurL, 1 PurQ and 2 PurS subunits.</text>
</comment>
<comment type="subcellular location">
    <subcellularLocation>
        <location evidence="1">Cytoplasm</location>
    </subcellularLocation>
</comment>
<comment type="similarity">
    <text evidence="1">Belongs to the FGAMS family.</text>
</comment>
<gene>
    <name evidence="1" type="primary">purL</name>
    <name type="ordered locus">BCB4264_A0340</name>
</gene>
<evidence type="ECO:0000255" key="1">
    <source>
        <dbReference type="HAMAP-Rule" id="MF_00420"/>
    </source>
</evidence>
<keyword id="KW-0067">ATP-binding</keyword>
<keyword id="KW-0963">Cytoplasm</keyword>
<keyword id="KW-0436">Ligase</keyword>
<keyword id="KW-0460">Magnesium</keyword>
<keyword id="KW-0479">Metal-binding</keyword>
<keyword id="KW-0547">Nucleotide-binding</keyword>
<keyword id="KW-0658">Purine biosynthesis</keyword>
<reference key="1">
    <citation type="submission" date="2008-10" db="EMBL/GenBank/DDBJ databases">
        <title>Genome sequence of Bacillus cereus B4264.</title>
        <authorList>
            <person name="Dodson R.J."/>
            <person name="Durkin A.S."/>
            <person name="Rosovitz M.J."/>
            <person name="Rasko D.A."/>
            <person name="Hoffmaster A."/>
            <person name="Ravel J."/>
            <person name="Sutton G."/>
        </authorList>
    </citation>
    <scope>NUCLEOTIDE SEQUENCE [LARGE SCALE GENOMIC DNA]</scope>
    <source>
        <strain>B4264</strain>
    </source>
</reference>